<dbReference type="EC" id="4.2.2.n1" evidence="1"/>
<dbReference type="EMBL" id="CP000266">
    <property type="protein sequence ID" value="ABF05091.1"/>
    <property type="status" value="ALT_INIT"/>
    <property type="molecule type" value="Genomic_DNA"/>
</dbReference>
<dbReference type="RefSeq" id="WP_005064048.1">
    <property type="nucleotide sequence ID" value="NC_008258.1"/>
</dbReference>
<dbReference type="SMR" id="Q0T0S4"/>
<dbReference type="CAZy" id="GH23">
    <property type="family name" value="Glycoside Hydrolase Family 23"/>
</dbReference>
<dbReference type="KEGG" id="sfv:SFV_3022"/>
<dbReference type="HOGENOM" id="CLU_044583_0_0_6"/>
<dbReference type="Proteomes" id="UP000000659">
    <property type="component" value="Chromosome"/>
</dbReference>
<dbReference type="GO" id="GO:0009279">
    <property type="term" value="C:cell outer membrane"/>
    <property type="evidence" value="ECO:0007669"/>
    <property type="project" value="UniProtKB-SubCell"/>
</dbReference>
<dbReference type="GO" id="GO:0016798">
    <property type="term" value="F:hydrolase activity, acting on glycosyl bonds"/>
    <property type="evidence" value="ECO:0007669"/>
    <property type="project" value="InterPro"/>
</dbReference>
<dbReference type="GO" id="GO:0008933">
    <property type="term" value="F:peptidoglycan lytic transglycosylase activity"/>
    <property type="evidence" value="ECO:0007669"/>
    <property type="project" value="UniProtKB-UniRule"/>
</dbReference>
<dbReference type="GO" id="GO:0016998">
    <property type="term" value="P:cell wall macromolecule catabolic process"/>
    <property type="evidence" value="ECO:0007669"/>
    <property type="project" value="UniProtKB-UniRule"/>
</dbReference>
<dbReference type="GO" id="GO:0071555">
    <property type="term" value="P:cell wall organization"/>
    <property type="evidence" value="ECO:0007669"/>
    <property type="project" value="UniProtKB-KW"/>
</dbReference>
<dbReference type="GO" id="GO:0000270">
    <property type="term" value="P:peptidoglycan metabolic process"/>
    <property type="evidence" value="ECO:0007669"/>
    <property type="project" value="InterPro"/>
</dbReference>
<dbReference type="CDD" id="cd16893">
    <property type="entry name" value="LT_MltC_MltE"/>
    <property type="match status" value="1"/>
</dbReference>
<dbReference type="FunFam" id="1.10.530.10:FF:000002">
    <property type="entry name" value="Membrane-bound lytic murein transglycosylase C"/>
    <property type="match status" value="1"/>
</dbReference>
<dbReference type="Gene3D" id="1.10.530.10">
    <property type="match status" value="1"/>
</dbReference>
<dbReference type="HAMAP" id="MF_01616">
    <property type="entry name" value="MltC"/>
    <property type="match status" value="1"/>
</dbReference>
<dbReference type="InterPro" id="IPR023346">
    <property type="entry name" value="Lysozyme-like_dom_sf"/>
</dbReference>
<dbReference type="InterPro" id="IPR023664">
    <property type="entry name" value="Murein_transglycosylaseC"/>
</dbReference>
<dbReference type="InterPro" id="IPR024570">
    <property type="entry name" value="Murein_transglycosylaseC_N"/>
</dbReference>
<dbReference type="InterPro" id="IPR000189">
    <property type="entry name" value="Transglyc_AS"/>
</dbReference>
<dbReference type="InterPro" id="IPR008258">
    <property type="entry name" value="Transglycosylase_SLT_dom_1"/>
</dbReference>
<dbReference type="NCBIfam" id="NF008670">
    <property type="entry name" value="PRK11671.1"/>
    <property type="match status" value="1"/>
</dbReference>
<dbReference type="PANTHER" id="PTHR37423:SF2">
    <property type="entry name" value="MEMBRANE-BOUND LYTIC MUREIN TRANSGLYCOSYLASE C"/>
    <property type="match status" value="1"/>
</dbReference>
<dbReference type="PANTHER" id="PTHR37423">
    <property type="entry name" value="SOLUBLE LYTIC MUREIN TRANSGLYCOSYLASE-RELATED"/>
    <property type="match status" value="1"/>
</dbReference>
<dbReference type="Pfam" id="PF11873">
    <property type="entry name" value="Mltc_N"/>
    <property type="match status" value="1"/>
</dbReference>
<dbReference type="Pfam" id="PF01464">
    <property type="entry name" value="SLT"/>
    <property type="match status" value="1"/>
</dbReference>
<dbReference type="SUPFAM" id="SSF53955">
    <property type="entry name" value="Lysozyme-like"/>
    <property type="match status" value="1"/>
</dbReference>
<dbReference type="PROSITE" id="PS51257">
    <property type="entry name" value="PROKAR_LIPOPROTEIN"/>
    <property type="match status" value="1"/>
</dbReference>
<dbReference type="PROSITE" id="PS00922">
    <property type="entry name" value="TRANSGLYCOSYLASE"/>
    <property type="match status" value="1"/>
</dbReference>
<sequence length="359" mass="40089">MKKYLALALIAPLLISCSTTKKGDTYNEAWVKDTNGFDILMGQFAHNIENIWGFKEVVIAGPKDYVKYTDQYQTRSHINFDDGTITIETIAGTEPAAHLRRAIIKTLLMGDDPSSVDLYSDVDDITISKEPFLYGQVVDNTGQPIRWEGRASNFADYLLKNRLKSRSNGLRIIYSVTINMVPNHLDKRAHKYLGMVRQASRKYGVDESLILAIMQTESSFNPYAVSRSDALGLMQVVQNTAGKDVFRSQGKSGTPSRSFLFDPASNIDTGTAYLAMLNNVYLGGIDNPTSRRYAVITAYNGGAGSVLRVFSNDKIQAANIINTMTPGDVYQTLTTRHPSAESRRYLYKVNTAQKSYRRR</sequence>
<keyword id="KW-0998">Cell outer membrane</keyword>
<keyword id="KW-0961">Cell wall biogenesis/degradation</keyword>
<keyword id="KW-0449">Lipoprotein</keyword>
<keyword id="KW-0456">Lyase</keyword>
<keyword id="KW-0472">Membrane</keyword>
<keyword id="KW-0564">Palmitate</keyword>
<keyword id="KW-0732">Signal</keyword>
<comment type="function">
    <text evidence="1">Murein-degrading enzyme. May play a role in recycling of muropeptides during cell elongation and/or cell division.</text>
</comment>
<comment type="catalytic activity">
    <reaction evidence="1">
        <text>Exolytic cleavage of the (1-&gt;4)-beta-glycosidic linkage between N-acetylmuramic acid (MurNAc) and N-acetylglucosamine (GlcNAc) residues in peptidoglycan, from either the reducing or the non-reducing ends of the peptidoglycan chains, with concomitant formation of a 1,6-anhydrobond in the MurNAc residue.</text>
        <dbReference type="EC" id="4.2.2.n1"/>
    </reaction>
</comment>
<comment type="subcellular location">
    <subcellularLocation>
        <location evidence="1">Cell outer membrane</location>
        <topology evidence="1">Lipid-anchor</topology>
    </subcellularLocation>
</comment>
<comment type="similarity">
    <text evidence="1">Belongs to the transglycosylase Slt family.</text>
</comment>
<comment type="sequence caution" evidence="2">
    <conflict type="erroneous initiation">
        <sequence resource="EMBL-CDS" id="ABF05091"/>
    </conflict>
</comment>
<evidence type="ECO:0000255" key="1">
    <source>
        <dbReference type="HAMAP-Rule" id="MF_01616"/>
    </source>
</evidence>
<evidence type="ECO:0000305" key="2"/>
<gene>
    <name evidence="1" type="primary">mltC</name>
    <name type="ordered locus">SFV_3022</name>
</gene>
<feature type="signal peptide" evidence="1">
    <location>
        <begin position="1"/>
        <end position="16"/>
    </location>
</feature>
<feature type="chain" id="PRO_0000335589" description="Membrane-bound lytic murein transglycosylase C">
    <location>
        <begin position="17"/>
        <end position="359"/>
    </location>
</feature>
<feature type="lipid moiety-binding region" description="N-palmitoyl cysteine" evidence="1">
    <location>
        <position position="17"/>
    </location>
</feature>
<feature type="lipid moiety-binding region" description="S-diacylglycerol cysteine" evidence="1">
    <location>
        <position position="17"/>
    </location>
</feature>
<protein>
    <recommendedName>
        <fullName evidence="1">Membrane-bound lytic murein transglycosylase C</fullName>
        <ecNumber evidence="1">4.2.2.n1</ecNumber>
    </recommendedName>
    <alternativeName>
        <fullName evidence="1">Murein lyase C</fullName>
    </alternativeName>
</protein>
<name>MLTC_SHIF8</name>
<accession>Q0T0S4</accession>
<proteinExistence type="inferred from homology"/>
<reference key="1">
    <citation type="journal article" date="2006" name="BMC Genomics">
        <title>Complete genome sequence of Shigella flexneri 5b and comparison with Shigella flexneri 2a.</title>
        <authorList>
            <person name="Nie H."/>
            <person name="Yang F."/>
            <person name="Zhang X."/>
            <person name="Yang J."/>
            <person name="Chen L."/>
            <person name="Wang J."/>
            <person name="Xiong Z."/>
            <person name="Peng J."/>
            <person name="Sun L."/>
            <person name="Dong J."/>
            <person name="Xue Y."/>
            <person name="Xu X."/>
            <person name="Chen S."/>
            <person name="Yao Z."/>
            <person name="Shen Y."/>
            <person name="Jin Q."/>
        </authorList>
    </citation>
    <scope>NUCLEOTIDE SEQUENCE [LARGE SCALE GENOMIC DNA]</scope>
    <source>
        <strain>8401</strain>
    </source>
</reference>
<organism>
    <name type="scientific">Shigella flexneri serotype 5b (strain 8401)</name>
    <dbReference type="NCBI Taxonomy" id="373384"/>
    <lineage>
        <taxon>Bacteria</taxon>
        <taxon>Pseudomonadati</taxon>
        <taxon>Pseudomonadota</taxon>
        <taxon>Gammaproteobacteria</taxon>
        <taxon>Enterobacterales</taxon>
        <taxon>Enterobacteriaceae</taxon>
        <taxon>Shigella</taxon>
    </lineage>
</organism>